<gene>
    <name evidence="1" type="primary">tpiA</name>
    <name type="ordered locus">STK_20300</name>
</gene>
<dbReference type="EC" id="5.3.1.1" evidence="1"/>
<dbReference type="EMBL" id="BA000023">
    <property type="protein sequence ID" value="BAB67127.1"/>
    <property type="molecule type" value="Genomic_DNA"/>
</dbReference>
<dbReference type="RefSeq" id="WP_010980103.1">
    <property type="nucleotide sequence ID" value="NC_003106.2"/>
</dbReference>
<dbReference type="SMR" id="Q96YZ9"/>
<dbReference type="STRING" id="273063.STK_20300"/>
<dbReference type="GeneID" id="1460092"/>
<dbReference type="KEGG" id="sto:STK_20300"/>
<dbReference type="PATRIC" id="fig|273063.9.peg.2317"/>
<dbReference type="eggNOG" id="arCOG01087">
    <property type="taxonomic scope" value="Archaea"/>
</dbReference>
<dbReference type="OrthoDB" id="9465at2157"/>
<dbReference type="UniPathway" id="UPA00109">
    <property type="reaction ID" value="UER00189"/>
</dbReference>
<dbReference type="UniPathway" id="UPA00138"/>
<dbReference type="Proteomes" id="UP000001015">
    <property type="component" value="Chromosome"/>
</dbReference>
<dbReference type="GO" id="GO:0005829">
    <property type="term" value="C:cytosol"/>
    <property type="evidence" value="ECO:0007669"/>
    <property type="project" value="TreeGrafter"/>
</dbReference>
<dbReference type="GO" id="GO:0004807">
    <property type="term" value="F:triose-phosphate isomerase activity"/>
    <property type="evidence" value="ECO:0007669"/>
    <property type="project" value="UniProtKB-UniRule"/>
</dbReference>
<dbReference type="GO" id="GO:0006094">
    <property type="term" value="P:gluconeogenesis"/>
    <property type="evidence" value="ECO:0007669"/>
    <property type="project" value="UniProtKB-UniRule"/>
</dbReference>
<dbReference type="GO" id="GO:0046166">
    <property type="term" value="P:glyceraldehyde-3-phosphate biosynthetic process"/>
    <property type="evidence" value="ECO:0007669"/>
    <property type="project" value="TreeGrafter"/>
</dbReference>
<dbReference type="GO" id="GO:0019563">
    <property type="term" value="P:glycerol catabolic process"/>
    <property type="evidence" value="ECO:0007669"/>
    <property type="project" value="TreeGrafter"/>
</dbReference>
<dbReference type="GO" id="GO:0006096">
    <property type="term" value="P:glycolytic process"/>
    <property type="evidence" value="ECO:0007669"/>
    <property type="project" value="UniProtKB-UniRule"/>
</dbReference>
<dbReference type="CDD" id="cd00311">
    <property type="entry name" value="TIM"/>
    <property type="match status" value="1"/>
</dbReference>
<dbReference type="FunFam" id="3.20.20.70:FF:000223">
    <property type="entry name" value="Triosephosphate isomerase"/>
    <property type="match status" value="1"/>
</dbReference>
<dbReference type="Gene3D" id="3.20.20.70">
    <property type="entry name" value="Aldolase class I"/>
    <property type="match status" value="1"/>
</dbReference>
<dbReference type="HAMAP" id="MF_00147_A">
    <property type="entry name" value="TIM_A"/>
    <property type="match status" value="1"/>
</dbReference>
<dbReference type="InterPro" id="IPR013785">
    <property type="entry name" value="Aldolase_TIM"/>
</dbReference>
<dbReference type="InterPro" id="IPR035990">
    <property type="entry name" value="TIM_sf"/>
</dbReference>
<dbReference type="InterPro" id="IPR000652">
    <property type="entry name" value="Triosephosphate_isomerase"/>
</dbReference>
<dbReference type="InterPro" id="IPR022891">
    <property type="entry name" value="Triosephosphate_isomerase_arc"/>
</dbReference>
<dbReference type="NCBIfam" id="NF003302">
    <property type="entry name" value="PRK04302.1"/>
    <property type="match status" value="1"/>
</dbReference>
<dbReference type="NCBIfam" id="TIGR00419">
    <property type="entry name" value="tim"/>
    <property type="match status" value="1"/>
</dbReference>
<dbReference type="PANTHER" id="PTHR21139">
    <property type="entry name" value="TRIOSEPHOSPHATE ISOMERASE"/>
    <property type="match status" value="1"/>
</dbReference>
<dbReference type="PANTHER" id="PTHR21139:SF42">
    <property type="entry name" value="TRIOSEPHOSPHATE ISOMERASE"/>
    <property type="match status" value="1"/>
</dbReference>
<dbReference type="Pfam" id="PF00121">
    <property type="entry name" value="TIM"/>
    <property type="match status" value="1"/>
</dbReference>
<dbReference type="SUPFAM" id="SSF51351">
    <property type="entry name" value="Triosephosphate isomerase (TIM)"/>
    <property type="match status" value="1"/>
</dbReference>
<dbReference type="PROSITE" id="PS51440">
    <property type="entry name" value="TIM_2"/>
    <property type="match status" value="1"/>
</dbReference>
<evidence type="ECO:0000255" key="1">
    <source>
        <dbReference type="HAMAP-Rule" id="MF_00147"/>
    </source>
</evidence>
<sequence>MKPPIILINYKAYENSYGEKGVEISKKIEKVSKDYGVPIIISVPATMIYKLSQILEIPVYAQHVDALRHGAHTGAILPEMIKDAGAKGSLLNHSERKIRLDEIHEAVTRIRDLGLESVVCADSYELVHPLALLKPNAILIEPPELIGSGRAVSKEKPEVITRAVNEIKKVEGVYLIAGAGITTGEDVYKAIELGADGIGVASAVMKSSTPEKIVEDFIINALKAIDRKK</sequence>
<feature type="chain" id="PRO_0000090347" description="Triosephosphate isomerase">
    <location>
        <begin position="1"/>
        <end position="229"/>
    </location>
</feature>
<feature type="active site" description="Electrophile" evidence="1">
    <location>
        <position position="93"/>
    </location>
</feature>
<feature type="active site" description="Proton acceptor" evidence="1">
    <location>
        <position position="141"/>
    </location>
</feature>
<feature type="binding site" evidence="1">
    <location>
        <begin position="9"/>
        <end position="11"/>
    </location>
    <ligand>
        <name>substrate</name>
    </ligand>
</feature>
<feature type="binding site" evidence="1">
    <location>
        <position position="146"/>
    </location>
    <ligand>
        <name>substrate</name>
    </ligand>
</feature>
<feature type="binding site" evidence="1">
    <location>
        <position position="180"/>
    </location>
    <ligand>
        <name>substrate</name>
    </ligand>
</feature>
<feature type="binding site" evidence="1">
    <location>
        <begin position="201"/>
        <end position="202"/>
    </location>
    <ligand>
        <name>substrate</name>
    </ligand>
</feature>
<reference key="1">
    <citation type="journal article" date="2001" name="DNA Res.">
        <title>Complete genome sequence of an aerobic thermoacidophilic Crenarchaeon, Sulfolobus tokodaii strain7.</title>
        <authorList>
            <person name="Kawarabayasi Y."/>
            <person name="Hino Y."/>
            <person name="Horikawa H."/>
            <person name="Jin-no K."/>
            <person name="Takahashi M."/>
            <person name="Sekine M."/>
            <person name="Baba S."/>
            <person name="Ankai A."/>
            <person name="Kosugi H."/>
            <person name="Hosoyama A."/>
            <person name="Fukui S."/>
            <person name="Nagai Y."/>
            <person name="Nishijima K."/>
            <person name="Otsuka R."/>
            <person name="Nakazawa H."/>
            <person name="Takamiya M."/>
            <person name="Kato Y."/>
            <person name="Yoshizawa T."/>
            <person name="Tanaka T."/>
            <person name="Kudoh Y."/>
            <person name="Yamazaki J."/>
            <person name="Kushida N."/>
            <person name="Oguchi A."/>
            <person name="Aoki K."/>
            <person name="Masuda S."/>
            <person name="Yanagii M."/>
            <person name="Nishimura M."/>
            <person name="Yamagishi A."/>
            <person name="Oshima T."/>
            <person name="Kikuchi H."/>
        </authorList>
    </citation>
    <scope>NUCLEOTIDE SEQUENCE [LARGE SCALE GENOMIC DNA]</scope>
    <source>
        <strain>DSM 16993 / JCM 10545 / NBRC 100140 / 7</strain>
    </source>
</reference>
<keyword id="KW-0963">Cytoplasm</keyword>
<keyword id="KW-0312">Gluconeogenesis</keyword>
<keyword id="KW-0324">Glycolysis</keyword>
<keyword id="KW-0413">Isomerase</keyword>
<keyword id="KW-1185">Reference proteome</keyword>
<accession>Q96YZ9</accession>
<comment type="function">
    <text evidence="1">Involved in the gluconeogenesis. Catalyzes stereospecifically the conversion of dihydroxyacetone phosphate (DHAP) to D-glyceraldehyde-3-phosphate (G3P).</text>
</comment>
<comment type="catalytic activity">
    <reaction evidence="1">
        <text>D-glyceraldehyde 3-phosphate = dihydroxyacetone phosphate</text>
        <dbReference type="Rhea" id="RHEA:18585"/>
        <dbReference type="ChEBI" id="CHEBI:57642"/>
        <dbReference type="ChEBI" id="CHEBI:59776"/>
        <dbReference type="EC" id="5.3.1.1"/>
    </reaction>
</comment>
<comment type="pathway">
    <text evidence="1">Carbohydrate biosynthesis; gluconeogenesis.</text>
</comment>
<comment type="pathway">
    <text evidence="1">Carbohydrate degradation; glycolysis; D-glyceraldehyde 3-phosphate from glycerone phosphate: step 1/1.</text>
</comment>
<comment type="subunit">
    <text evidence="1">Homotetramer; dimer of dimers.</text>
</comment>
<comment type="subcellular location">
    <subcellularLocation>
        <location evidence="1">Cytoplasm</location>
    </subcellularLocation>
</comment>
<comment type="similarity">
    <text evidence="1">Belongs to the triosephosphate isomerase family.</text>
</comment>
<proteinExistence type="inferred from homology"/>
<organism>
    <name type="scientific">Sulfurisphaera tokodaii (strain DSM 16993 / JCM 10545 / NBRC 100140 / 7)</name>
    <name type="common">Sulfolobus tokodaii</name>
    <dbReference type="NCBI Taxonomy" id="273063"/>
    <lineage>
        <taxon>Archaea</taxon>
        <taxon>Thermoproteota</taxon>
        <taxon>Thermoprotei</taxon>
        <taxon>Sulfolobales</taxon>
        <taxon>Sulfolobaceae</taxon>
        <taxon>Sulfurisphaera</taxon>
    </lineage>
</organism>
<name>TPIS_SULTO</name>
<protein>
    <recommendedName>
        <fullName evidence="1">Triosephosphate isomerase</fullName>
        <shortName evidence="1">TIM</shortName>
        <shortName evidence="1">TPI</shortName>
        <ecNumber evidence="1">5.3.1.1</ecNumber>
    </recommendedName>
    <alternativeName>
        <fullName evidence="1">Triose-phosphate isomerase</fullName>
    </alternativeName>
</protein>